<comment type="function">
    <text evidence="1">Key enzyme in glycolysis that catalyzes the first step of the pathway by converting D-glyceraldehyde 3-phosphate (G3P) into 3-phospho-D-glyceroyl phosphate. Essential for the maintenance of cellular ATP levels and carbohydrate metabolism (By similarity).</text>
</comment>
<comment type="catalytic activity">
    <reaction evidence="2">
        <text>D-glyceraldehyde 3-phosphate + phosphate + NAD(+) = (2R)-3-phospho-glyceroyl phosphate + NADH + H(+)</text>
        <dbReference type="Rhea" id="RHEA:10300"/>
        <dbReference type="ChEBI" id="CHEBI:15378"/>
        <dbReference type="ChEBI" id="CHEBI:43474"/>
        <dbReference type="ChEBI" id="CHEBI:57540"/>
        <dbReference type="ChEBI" id="CHEBI:57604"/>
        <dbReference type="ChEBI" id="CHEBI:57945"/>
        <dbReference type="ChEBI" id="CHEBI:59776"/>
        <dbReference type="EC" id="1.2.1.12"/>
    </reaction>
</comment>
<comment type="pathway">
    <text>Carbohydrate degradation; glycolysis; pyruvate from D-glyceraldehyde 3-phosphate: step 1/5.</text>
</comment>
<comment type="subunit">
    <text evidence="1">Homotetramer.</text>
</comment>
<comment type="subcellular location">
    <subcellularLocation>
        <location evidence="1">Cytoplasm</location>
    </subcellularLocation>
</comment>
<comment type="miscellaneous">
    <text>Plants contain two types of GAPDH: cytosolic forms which participate in glycolysis and chloroplast forms which participate in photosynthesis. All the forms are encoded by distinct genes.</text>
</comment>
<comment type="similarity">
    <text evidence="3">Belongs to the glyceraldehyde-3-phosphate dehydrogenase family.</text>
</comment>
<comment type="sequence caution" evidence="3">
    <conflict type="erroneous initiation">
        <sequence resource="EMBL-CDS" id="CAA42103"/>
    </conflict>
</comment>
<reference key="1">
    <citation type="journal article" date="1989" name="Nature">
        <title>Molecular evidence for pre-Cretaceous angiosperm origins.</title>
        <authorList>
            <person name="Martin W."/>
            <person name="Gierl A."/>
            <person name="Seadler H."/>
        </authorList>
    </citation>
    <scope>NUCLEOTIDE SEQUENCE [MRNA]</scope>
</reference>
<accession>P25861</accession>
<keyword id="KW-0963">Cytoplasm</keyword>
<keyword id="KW-0324">Glycolysis</keyword>
<keyword id="KW-0520">NAD</keyword>
<keyword id="KW-0560">Oxidoreductase</keyword>
<sequence length="337" mass="36685">MAPIKIGINGFGRIGRLVARVALQRDDVELVAVNDPFISTDYMTYMFKYDSVHGAWKHHELKVKDEKTLLFGEKPVVVFGRRNPEEIPRASTGAEYIVESTGVFTDKDKAAAHLKGGAKKVIISAPSKDAPMFVVGVNEKEYKSDLHIVSNASCTTNCLAPLAKVINDRFGIVEGLMTTVHSITATQKTVDGPSAKDWRGGRAASFNIIPSSTGAAKAVGKVLPQLNGKLTGMSFRVPTVDVSVVDLTVRLEKKATYEQIKAAIKEESEGKLKGILGYTEDDVVSTDFVGDSRSSIFDAKAGIALNDNFVKLVSWYDNEWGYSTRVVDLIVHMASVQ</sequence>
<feature type="chain" id="PRO_0000145593" description="Glyceraldehyde-3-phosphate dehydrogenase, cytosolic">
    <location>
        <begin position="1"/>
        <end position="337"/>
    </location>
</feature>
<feature type="active site" description="Nucleophile" evidence="2">
    <location>
        <position position="154"/>
    </location>
</feature>
<feature type="binding site" evidence="1">
    <location>
        <begin position="13"/>
        <end position="14"/>
    </location>
    <ligand>
        <name>NAD(+)</name>
        <dbReference type="ChEBI" id="CHEBI:57540"/>
    </ligand>
</feature>
<feature type="binding site" evidence="1">
    <location>
        <position position="35"/>
    </location>
    <ligand>
        <name>NAD(+)</name>
        <dbReference type="ChEBI" id="CHEBI:57540"/>
    </ligand>
</feature>
<feature type="binding site" evidence="1">
    <location>
        <position position="82"/>
    </location>
    <ligand>
        <name>NAD(+)</name>
        <dbReference type="ChEBI" id="CHEBI:57540"/>
    </ligand>
</feature>
<feature type="binding site" evidence="1">
    <location>
        <begin position="153"/>
        <end position="155"/>
    </location>
    <ligand>
        <name>D-glyceraldehyde 3-phosphate</name>
        <dbReference type="ChEBI" id="CHEBI:59776"/>
    </ligand>
</feature>
<feature type="binding site" evidence="1">
    <location>
        <position position="184"/>
    </location>
    <ligand>
        <name>D-glyceraldehyde 3-phosphate</name>
        <dbReference type="ChEBI" id="CHEBI:59776"/>
    </ligand>
</feature>
<feature type="binding site" evidence="1">
    <location>
        <begin position="213"/>
        <end position="214"/>
    </location>
    <ligand>
        <name>D-glyceraldehyde 3-phosphate</name>
        <dbReference type="ChEBI" id="CHEBI:59776"/>
    </ligand>
</feature>
<feature type="binding site" evidence="1">
    <location>
        <position position="236"/>
    </location>
    <ligand>
        <name>D-glyceraldehyde 3-phosphate</name>
        <dbReference type="ChEBI" id="CHEBI:59776"/>
    </ligand>
</feature>
<feature type="binding site" evidence="1">
    <location>
        <position position="318"/>
    </location>
    <ligand>
        <name>NAD(+)</name>
        <dbReference type="ChEBI" id="CHEBI:57540"/>
    </ligand>
</feature>
<feature type="site" description="Activates thiol group during catalysis" evidence="1">
    <location>
        <position position="181"/>
    </location>
</feature>
<organism>
    <name type="scientific">Antirrhinum majus</name>
    <name type="common">Garden snapdragon</name>
    <dbReference type="NCBI Taxonomy" id="4151"/>
    <lineage>
        <taxon>Eukaryota</taxon>
        <taxon>Viridiplantae</taxon>
        <taxon>Streptophyta</taxon>
        <taxon>Embryophyta</taxon>
        <taxon>Tracheophyta</taxon>
        <taxon>Spermatophyta</taxon>
        <taxon>Magnoliopsida</taxon>
        <taxon>eudicotyledons</taxon>
        <taxon>Gunneridae</taxon>
        <taxon>Pentapetalae</taxon>
        <taxon>asterids</taxon>
        <taxon>lamiids</taxon>
        <taxon>Lamiales</taxon>
        <taxon>Plantaginaceae</taxon>
        <taxon>Antirrhineae</taxon>
        <taxon>Antirrhinum</taxon>
    </lineage>
</organism>
<proteinExistence type="evidence at transcript level"/>
<gene>
    <name type="primary">GAPC</name>
    <name type="synonym">GAPDH</name>
</gene>
<protein>
    <recommendedName>
        <fullName>Glyceraldehyde-3-phosphate dehydrogenase, cytosolic</fullName>
        <ecNumber>1.2.1.12</ecNumber>
    </recommendedName>
</protein>
<evidence type="ECO:0000250" key="1"/>
<evidence type="ECO:0000255" key="2">
    <source>
        <dbReference type="PROSITE-ProRule" id="PRU10009"/>
    </source>
</evidence>
<evidence type="ECO:0000305" key="3"/>
<name>G3PC_ANTMA</name>
<dbReference type="EC" id="1.2.1.12"/>
<dbReference type="EMBL" id="X59517">
    <property type="protein sequence ID" value="CAA42103.1"/>
    <property type="status" value="ALT_INIT"/>
    <property type="molecule type" value="mRNA"/>
</dbReference>
<dbReference type="PIR" id="S17991">
    <property type="entry name" value="DESKG"/>
</dbReference>
<dbReference type="SMR" id="P25861"/>
<dbReference type="UniPathway" id="UPA00109">
    <property type="reaction ID" value="UER00184"/>
</dbReference>
<dbReference type="GO" id="GO:0005829">
    <property type="term" value="C:cytosol"/>
    <property type="evidence" value="ECO:0007669"/>
    <property type="project" value="TreeGrafter"/>
</dbReference>
<dbReference type="GO" id="GO:0004365">
    <property type="term" value="F:glyceraldehyde-3-phosphate dehydrogenase (NAD+) (phosphorylating) activity"/>
    <property type="evidence" value="ECO:0007669"/>
    <property type="project" value="UniProtKB-EC"/>
</dbReference>
<dbReference type="GO" id="GO:0051287">
    <property type="term" value="F:NAD binding"/>
    <property type="evidence" value="ECO:0007669"/>
    <property type="project" value="InterPro"/>
</dbReference>
<dbReference type="GO" id="GO:0050661">
    <property type="term" value="F:NADP binding"/>
    <property type="evidence" value="ECO:0007669"/>
    <property type="project" value="InterPro"/>
</dbReference>
<dbReference type="GO" id="GO:0006006">
    <property type="term" value="P:glucose metabolic process"/>
    <property type="evidence" value="ECO:0007669"/>
    <property type="project" value="InterPro"/>
</dbReference>
<dbReference type="GO" id="GO:0006096">
    <property type="term" value="P:glycolytic process"/>
    <property type="evidence" value="ECO:0007669"/>
    <property type="project" value="UniProtKB-UniPathway"/>
</dbReference>
<dbReference type="CDD" id="cd18126">
    <property type="entry name" value="GAPDH_I_C"/>
    <property type="match status" value="1"/>
</dbReference>
<dbReference type="CDD" id="cd05214">
    <property type="entry name" value="GAPDH_I_N"/>
    <property type="match status" value="1"/>
</dbReference>
<dbReference type="FunFam" id="3.30.360.10:FF:000001">
    <property type="entry name" value="Glyceraldehyde-3-phosphate dehydrogenase"/>
    <property type="match status" value="1"/>
</dbReference>
<dbReference type="FunFam" id="3.40.50.720:FF:000020">
    <property type="entry name" value="Glyceraldehyde-3-phosphate dehydrogenase"/>
    <property type="match status" value="1"/>
</dbReference>
<dbReference type="Gene3D" id="3.30.360.10">
    <property type="entry name" value="Dihydrodipicolinate Reductase, domain 2"/>
    <property type="match status" value="1"/>
</dbReference>
<dbReference type="Gene3D" id="3.40.50.720">
    <property type="entry name" value="NAD(P)-binding Rossmann-like Domain"/>
    <property type="match status" value="1"/>
</dbReference>
<dbReference type="InterPro" id="IPR020831">
    <property type="entry name" value="GlycerAld/Erythrose_P_DH"/>
</dbReference>
<dbReference type="InterPro" id="IPR020830">
    <property type="entry name" value="GlycerAld_3-P_DH_AS"/>
</dbReference>
<dbReference type="InterPro" id="IPR020829">
    <property type="entry name" value="GlycerAld_3-P_DH_cat"/>
</dbReference>
<dbReference type="InterPro" id="IPR020828">
    <property type="entry name" value="GlycerAld_3-P_DH_NAD(P)-bd"/>
</dbReference>
<dbReference type="InterPro" id="IPR006424">
    <property type="entry name" value="Glyceraldehyde-3-P_DH_1"/>
</dbReference>
<dbReference type="InterPro" id="IPR036291">
    <property type="entry name" value="NAD(P)-bd_dom_sf"/>
</dbReference>
<dbReference type="NCBIfam" id="TIGR01534">
    <property type="entry name" value="GAPDH-I"/>
    <property type="match status" value="1"/>
</dbReference>
<dbReference type="PANTHER" id="PTHR10836">
    <property type="entry name" value="GLYCERALDEHYDE 3-PHOSPHATE DEHYDROGENASE"/>
    <property type="match status" value="1"/>
</dbReference>
<dbReference type="PANTHER" id="PTHR10836:SF132">
    <property type="entry name" value="GLYCERALDEHYDE-3-PHOSPHATE DEHYDROGENASE"/>
    <property type="match status" value="1"/>
</dbReference>
<dbReference type="Pfam" id="PF02800">
    <property type="entry name" value="Gp_dh_C"/>
    <property type="match status" value="1"/>
</dbReference>
<dbReference type="Pfam" id="PF00044">
    <property type="entry name" value="Gp_dh_N"/>
    <property type="match status" value="1"/>
</dbReference>
<dbReference type="PIRSF" id="PIRSF000149">
    <property type="entry name" value="GAP_DH"/>
    <property type="match status" value="1"/>
</dbReference>
<dbReference type="PRINTS" id="PR00078">
    <property type="entry name" value="G3PDHDRGNASE"/>
</dbReference>
<dbReference type="SMART" id="SM00846">
    <property type="entry name" value="Gp_dh_N"/>
    <property type="match status" value="1"/>
</dbReference>
<dbReference type="SUPFAM" id="SSF55347">
    <property type="entry name" value="Glyceraldehyde-3-phosphate dehydrogenase-like, C-terminal domain"/>
    <property type="match status" value="1"/>
</dbReference>
<dbReference type="SUPFAM" id="SSF51735">
    <property type="entry name" value="NAD(P)-binding Rossmann-fold domains"/>
    <property type="match status" value="1"/>
</dbReference>
<dbReference type="PROSITE" id="PS00071">
    <property type="entry name" value="GAPDH"/>
    <property type="match status" value="1"/>
</dbReference>